<comment type="function">
    <text evidence="1">NDH-1 shuttles electrons from NADH, via FMN and iron-sulfur (Fe-S) centers, to quinones in the respiratory chain. The immediate electron acceptor for the enzyme in this species is believed to be ubiquinone. Couples the redox reaction to proton translocation (for every two electrons transferred, four hydrogen ions are translocated across the cytoplasmic membrane), and thus conserves the redox energy in a proton gradient.</text>
</comment>
<comment type="catalytic activity">
    <reaction evidence="1">
        <text>a quinone + NADH + 5 H(+)(in) = a quinol + NAD(+) + 4 H(+)(out)</text>
        <dbReference type="Rhea" id="RHEA:57888"/>
        <dbReference type="ChEBI" id="CHEBI:15378"/>
        <dbReference type="ChEBI" id="CHEBI:24646"/>
        <dbReference type="ChEBI" id="CHEBI:57540"/>
        <dbReference type="ChEBI" id="CHEBI:57945"/>
        <dbReference type="ChEBI" id="CHEBI:132124"/>
    </reaction>
</comment>
<comment type="cofactor">
    <cofactor evidence="1">
        <name>[4Fe-4S] cluster</name>
        <dbReference type="ChEBI" id="CHEBI:49883"/>
    </cofactor>
    <text evidence="1">Binds 1 [4Fe-4S] cluster.</text>
</comment>
<comment type="subunit">
    <text evidence="1">NDH-1 is composed of 14 different subunits. Subunits NuoB, C, D, E, F, and G constitute the peripheral sector of the complex.</text>
</comment>
<comment type="subcellular location">
    <subcellularLocation>
        <location evidence="1">Cell membrane</location>
        <topology evidence="1">Peripheral membrane protein</topology>
        <orientation evidence="1">Cytoplasmic side</orientation>
    </subcellularLocation>
</comment>
<comment type="similarity">
    <text evidence="1">Belongs to the complex I 20 kDa subunit family.</text>
</comment>
<protein>
    <recommendedName>
        <fullName evidence="1">NADH-quinone oxidoreductase subunit B 1</fullName>
        <ecNumber evidence="1">7.1.1.-</ecNumber>
    </recommendedName>
    <alternativeName>
        <fullName evidence="1">NADH dehydrogenase I subunit B 1</fullName>
    </alternativeName>
    <alternativeName>
        <fullName evidence="1">NDH-1 subunit B 1</fullName>
    </alternativeName>
</protein>
<accession>B8G705</accession>
<organism>
    <name type="scientific">Chloroflexus aggregans (strain MD-66 / DSM 9485)</name>
    <dbReference type="NCBI Taxonomy" id="326427"/>
    <lineage>
        <taxon>Bacteria</taxon>
        <taxon>Bacillati</taxon>
        <taxon>Chloroflexota</taxon>
        <taxon>Chloroflexia</taxon>
        <taxon>Chloroflexales</taxon>
        <taxon>Chloroflexineae</taxon>
        <taxon>Chloroflexaceae</taxon>
        <taxon>Chloroflexus</taxon>
    </lineage>
</organism>
<sequence length="174" mass="19123">MGIEEKAGNLGIVTTTLETVVNWGRTNAMWPLLFGLACCAIEMMGAQASNYDLSRFGMELNRASPRQADLMIVAGRVSRKMAPVVRRLYDQMPEPKWVIAMGDCAACGGIFNNYAIVQGVDEVVPVDVYVAGCPPRPEALIDGIMMLHQKVMREKLSGKKEAPIRIDQPLVQVK</sequence>
<reference key="1">
    <citation type="submission" date="2008-12" db="EMBL/GenBank/DDBJ databases">
        <title>Complete sequence of Chloroflexus aggregans DSM 9485.</title>
        <authorList>
            <consortium name="US DOE Joint Genome Institute"/>
            <person name="Lucas S."/>
            <person name="Copeland A."/>
            <person name="Lapidus A."/>
            <person name="Glavina del Rio T."/>
            <person name="Dalin E."/>
            <person name="Tice H."/>
            <person name="Pitluck S."/>
            <person name="Foster B."/>
            <person name="Larimer F."/>
            <person name="Land M."/>
            <person name="Hauser L."/>
            <person name="Kyrpides N."/>
            <person name="Mikhailova N."/>
            <person name="Bryant D.A."/>
            <person name="Richardson P."/>
        </authorList>
    </citation>
    <scope>NUCLEOTIDE SEQUENCE [LARGE SCALE GENOMIC DNA]</scope>
    <source>
        <strain>MD-66 / DSM 9485</strain>
    </source>
</reference>
<keyword id="KW-0004">4Fe-4S</keyword>
<keyword id="KW-1003">Cell membrane</keyword>
<keyword id="KW-0408">Iron</keyword>
<keyword id="KW-0411">Iron-sulfur</keyword>
<keyword id="KW-0472">Membrane</keyword>
<keyword id="KW-0479">Metal-binding</keyword>
<keyword id="KW-0520">NAD</keyword>
<keyword id="KW-0874">Quinone</keyword>
<keyword id="KW-1278">Translocase</keyword>
<keyword id="KW-0813">Transport</keyword>
<keyword id="KW-0830">Ubiquinone</keyword>
<name>NUOB1_CHLAD</name>
<evidence type="ECO:0000255" key="1">
    <source>
        <dbReference type="HAMAP-Rule" id="MF_01356"/>
    </source>
</evidence>
<dbReference type="EC" id="7.1.1.-" evidence="1"/>
<dbReference type="EMBL" id="CP001337">
    <property type="protein sequence ID" value="ACL23962.1"/>
    <property type="molecule type" value="Genomic_DNA"/>
</dbReference>
<dbReference type="RefSeq" id="WP_012616326.1">
    <property type="nucleotide sequence ID" value="NC_011831.1"/>
</dbReference>
<dbReference type="SMR" id="B8G705"/>
<dbReference type="STRING" id="326427.Cagg_1048"/>
<dbReference type="KEGG" id="cag:Cagg_1048"/>
<dbReference type="eggNOG" id="COG0377">
    <property type="taxonomic scope" value="Bacteria"/>
</dbReference>
<dbReference type="HOGENOM" id="CLU_055737_7_3_0"/>
<dbReference type="OrthoDB" id="9786737at2"/>
<dbReference type="Proteomes" id="UP000002508">
    <property type="component" value="Chromosome"/>
</dbReference>
<dbReference type="GO" id="GO:0005886">
    <property type="term" value="C:plasma membrane"/>
    <property type="evidence" value="ECO:0007669"/>
    <property type="project" value="UniProtKB-SubCell"/>
</dbReference>
<dbReference type="GO" id="GO:0045271">
    <property type="term" value="C:respiratory chain complex I"/>
    <property type="evidence" value="ECO:0007669"/>
    <property type="project" value="TreeGrafter"/>
</dbReference>
<dbReference type="GO" id="GO:0051539">
    <property type="term" value="F:4 iron, 4 sulfur cluster binding"/>
    <property type="evidence" value="ECO:0007669"/>
    <property type="project" value="UniProtKB-KW"/>
</dbReference>
<dbReference type="GO" id="GO:0005506">
    <property type="term" value="F:iron ion binding"/>
    <property type="evidence" value="ECO:0007669"/>
    <property type="project" value="UniProtKB-UniRule"/>
</dbReference>
<dbReference type="GO" id="GO:0008137">
    <property type="term" value="F:NADH dehydrogenase (ubiquinone) activity"/>
    <property type="evidence" value="ECO:0007669"/>
    <property type="project" value="InterPro"/>
</dbReference>
<dbReference type="GO" id="GO:0050136">
    <property type="term" value="F:NADH:ubiquinone reductase (non-electrogenic) activity"/>
    <property type="evidence" value="ECO:0007669"/>
    <property type="project" value="UniProtKB-UniRule"/>
</dbReference>
<dbReference type="GO" id="GO:0048038">
    <property type="term" value="F:quinone binding"/>
    <property type="evidence" value="ECO:0007669"/>
    <property type="project" value="UniProtKB-KW"/>
</dbReference>
<dbReference type="GO" id="GO:0009060">
    <property type="term" value="P:aerobic respiration"/>
    <property type="evidence" value="ECO:0007669"/>
    <property type="project" value="TreeGrafter"/>
</dbReference>
<dbReference type="GO" id="GO:0015990">
    <property type="term" value="P:electron transport coupled proton transport"/>
    <property type="evidence" value="ECO:0007669"/>
    <property type="project" value="TreeGrafter"/>
</dbReference>
<dbReference type="FunFam" id="3.40.50.12280:FF:000004">
    <property type="entry name" value="NADH-quinone oxidoreductase subunit B"/>
    <property type="match status" value="1"/>
</dbReference>
<dbReference type="Gene3D" id="3.40.50.12280">
    <property type="match status" value="1"/>
</dbReference>
<dbReference type="HAMAP" id="MF_01356">
    <property type="entry name" value="NDH1_NuoB"/>
    <property type="match status" value="1"/>
</dbReference>
<dbReference type="InterPro" id="IPR006137">
    <property type="entry name" value="NADH_UbQ_OxRdtase-like_20kDa"/>
</dbReference>
<dbReference type="InterPro" id="IPR006138">
    <property type="entry name" value="NADH_UQ_OxRdtase_20Kd_su"/>
</dbReference>
<dbReference type="NCBIfam" id="TIGR01957">
    <property type="entry name" value="nuoB_fam"/>
    <property type="match status" value="1"/>
</dbReference>
<dbReference type="NCBIfam" id="NF005012">
    <property type="entry name" value="PRK06411.1"/>
    <property type="match status" value="1"/>
</dbReference>
<dbReference type="PANTHER" id="PTHR11995">
    <property type="entry name" value="NADH DEHYDROGENASE"/>
    <property type="match status" value="1"/>
</dbReference>
<dbReference type="PANTHER" id="PTHR11995:SF14">
    <property type="entry name" value="NADH DEHYDROGENASE [UBIQUINONE] IRON-SULFUR PROTEIN 7, MITOCHONDRIAL"/>
    <property type="match status" value="1"/>
</dbReference>
<dbReference type="Pfam" id="PF01058">
    <property type="entry name" value="Oxidored_q6"/>
    <property type="match status" value="1"/>
</dbReference>
<dbReference type="SUPFAM" id="SSF56770">
    <property type="entry name" value="HydA/Nqo6-like"/>
    <property type="match status" value="1"/>
</dbReference>
<gene>
    <name evidence="1" type="primary">nuoB1</name>
    <name type="ordered locus">Cagg_1048</name>
</gene>
<feature type="chain" id="PRO_0000376173" description="NADH-quinone oxidoreductase subunit B 1">
    <location>
        <begin position="1"/>
        <end position="174"/>
    </location>
</feature>
<feature type="binding site" evidence="1">
    <location>
        <position position="38"/>
    </location>
    <ligand>
        <name>[4Fe-4S] cluster</name>
        <dbReference type="ChEBI" id="CHEBI:49883"/>
    </ligand>
</feature>
<feature type="binding site" evidence="1">
    <location>
        <position position="39"/>
    </location>
    <ligand>
        <name>[4Fe-4S] cluster</name>
        <dbReference type="ChEBI" id="CHEBI:49883"/>
    </ligand>
</feature>
<feature type="binding site" evidence="1">
    <location>
        <position position="104"/>
    </location>
    <ligand>
        <name>[4Fe-4S] cluster</name>
        <dbReference type="ChEBI" id="CHEBI:49883"/>
    </ligand>
</feature>
<feature type="binding site" evidence="1">
    <location>
        <position position="133"/>
    </location>
    <ligand>
        <name>[4Fe-4S] cluster</name>
        <dbReference type="ChEBI" id="CHEBI:49883"/>
    </ligand>
</feature>
<proteinExistence type="inferred from homology"/>